<organism>
    <name type="scientific">Streptomyces coelicolor (strain ATCC BAA-471 / A3(2) / M145)</name>
    <dbReference type="NCBI Taxonomy" id="100226"/>
    <lineage>
        <taxon>Bacteria</taxon>
        <taxon>Bacillati</taxon>
        <taxon>Actinomycetota</taxon>
        <taxon>Actinomycetes</taxon>
        <taxon>Kitasatosporales</taxon>
        <taxon>Streptomycetaceae</taxon>
        <taxon>Streptomyces</taxon>
        <taxon>Streptomyces albidoflavus group</taxon>
    </lineage>
</organism>
<gene>
    <name type="primary">actII-3</name>
    <name type="ordered locus">SCO5084</name>
    <name type="ORF">SCBAC28G1.10</name>
</gene>
<name>MMPLA_STRCO</name>
<proteinExistence type="inferred from homology"/>
<evidence type="ECO:0000255" key="1"/>
<evidence type="ECO:0000256" key="2">
    <source>
        <dbReference type="SAM" id="MobiDB-lite"/>
    </source>
</evidence>
<evidence type="ECO:0000305" key="3"/>
<keyword id="KW-1003">Cell membrane</keyword>
<keyword id="KW-0472">Membrane</keyword>
<keyword id="KW-1185">Reference proteome</keyword>
<keyword id="KW-0812">Transmembrane</keyword>
<keyword id="KW-1133">Transmembrane helix</keyword>
<accession>Q53902</accession>
<feature type="chain" id="PRO_0000103581" description="Putative membrane protein ActII-3">
    <location>
        <begin position="1"/>
        <end position="711"/>
    </location>
</feature>
<feature type="transmembrane region" description="Helical" evidence="1">
    <location>
        <begin position="14"/>
        <end position="34"/>
    </location>
</feature>
<feature type="transmembrane region" description="Helical" evidence="1">
    <location>
        <begin position="175"/>
        <end position="195"/>
    </location>
</feature>
<feature type="transmembrane region" description="Helical" evidence="1">
    <location>
        <begin position="199"/>
        <end position="219"/>
    </location>
</feature>
<feature type="transmembrane region" description="Helical" evidence="1">
    <location>
        <begin position="235"/>
        <end position="255"/>
    </location>
</feature>
<feature type="transmembrane region" description="Helical" evidence="1">
    <location>
        <begin position="281"/>
        <end position="301"/>
    </location>
</feature>
<feature type="transmembrane region" description="Helical" evidence="1">
    <location>
        <begin position="313"/>
        <end position="333"/>
    </location>
</feature>
<feature type="transmembrane region" description="Helical" evidence="1">
    <location>
        <begin position="369"/>
        <end position="389"/>
    </location>
</feature>
<feature type="transmembrane region" description="Helical" evidence="1">
    <location>
        <begin position="516"/>
        <end position="536"/>
    </location>
</feature>
<feature type="transmembrane region" description="Helical" evidence="1">
    <location>
        <begin position="540"/>
        <end position="560"/>
    </location>
</feature>
<feature type="transmembrane region" description="Helical" evidence="1">
    <location>
        <begin position="573"/>
        <end position="593"/>
    </location>
</feature>
<feature type="transmembrane region" description="Helical" evidence="1">
    <location>
        <begin position="623"/>
        <end position="643"/>
    </location>
</feature>
<feature type="transmembrane region" description="Helical" evidence="1">
    <location>
        <begin position="645"/>
        <end position="665"/>
    </location>
</feature>
<feature type="region of interest" description="Disordered" evidence="2">
    <location>
        <begin position="685"/>
        <end position="711"/>
    </location>
</feature>
<sequence length="711" mass="74863">MTRTLLSWPGGRRLKWLVLAAWIGLLIVLQPLAGKLGDVESNDAAAWLPGNAESTEVLELSEKFQPADTSPTVIVYDRPSGITAADEAKARADATHFADGTGVVGEPYGPVRSDDGKALRTVVNVHLGKDGWEGLNAAAKDMRAIARPSAPDGLGVHVTGPTGYAADSAESFSSADFKLTLVTLLIVVTILVVTYRSPLLWLLPMISAGMSLVISQAIVYLLAKNAGLTVNAQTAMILTVLVLGAATDYALLLVARYREELRRHEDRHEAMAVALRRAGPAIVASAATVAVSMLVLLLAALNSTKGLGPVCAVGVLVGLLSMMTLLPALLVIFGRWVFWPARPKHGTEPDVTRGLWSRIARLVSGRPRAVWVTTSLLLGAVATLAVTLNADGLQQKDGFKTKPESVVGEEILTRHFPAGSGEPMVVIAKGASADQVHAALETVPGVIEVAPPQVKDGLAYVEATLGAGADSPAAMRSVTAARETLARLDGAQARVGGSSAVVHDMREASSRDRGLIIPVILAVVFCILALLLRALVAPLLLIASVVLSFFTALGLAALFFNHVFDFAGADSAFPLWVFVFLVALGVDYNIFLVTRIKEESDRLGTRQGALKGLTSTGGVITAAGLVLAGTFAALATLPLVFIAELGFTVAVGVLLDTMIVRSVLVTALTLDVGRWMWWPHPLARREDPSEDPAVSGMPDSIDSEASTTASR</sequence>
<dbReference type="EMBL" id="M64683">
    <property type="protein sequence ID" value="AAA26691.1"/>
    <property type="molecule type" value="Genomic_DNA"/>
</dbReference>
<dbReference type="EMBL" id="AL939122">
    <property type="protein sequence ID" value="CAC44197.1"/>
    <property type="molecule type" value="Genomic_DNA"/>
</dbReference>
<dbReference type="PIR" id="C40046">
    <property type="entry name" value="C40046"/>
</dbReference>
<dbReference type="RefSeq" id="NP_629234.1">
    <property type="nucleotide sequence ID" value="NC_003888.3"/>
</dbReference>
<dbReference type="RefSeq" id="WP_011030047.1">
    <property type="nucleotide sequence ID" value="NZ_VNID01000008.1"/>
</dbReference>
<dbReference type="SMR" id="Q53902"/>
<dbReference type="STRING" id="100226.gene:17762733"/>
<dbReference type="TCDB" id="2.A.6.5.1">
    <property type="family name" value="the resistance-nodulation-cell division (rnd) superfamily"/>
</dbReference>
<dbReference type="PaxDb" id="100226-SCO5084"/>
<dbReference type="KEGG" id="sco:SCO5084"/>
<dbReference type="PATRIC" id="fig|100226.15.peg.5164"/>
<dbReference type="eggNOG" id="COG2409">
    <property type="taxonomic scope" value="Bacteria"/>
</dbReference>
<dbReference type="HOGENOM" id="CLU_005108_4_1_11"/>
<dbReference type="InParanoid" id="Q53902"/>
<dbReference type="OrthoDB" id="2365435at2"/>
<dbReference type="PhylomeDB" id="Q53902"/>
<dbReference type="Proteomes" id="UP000001973">
    <property type="component" value="Chromosome"/>
</dbReference>
<dbReference type="GO" id="GO:0005886">
    <property type="term" value="C:plasma membrane"/>
    <property type="evidence" value="ECO:0007669"/>
    <property type="project" value="UniProtKB-SubCell"/>
</dbReference>
<dbReference type="Gene3D" id="1.20.1640.10">
    <property type="entry name" value="Multidrug efflux transporter AcrB transmembrane domain"/>
    <property type="match status" value="2"/>
</dbReference>
<dbReference type="InterPro" id="IPR004869">
    <property type="entry name" value="MMPL_dom"/>
</dbReference>
<dbReference type="InterPro" id="IPR050545">
    <property type="entry name" value="Mycobact_MmpL"/>
</dbReference>
<dbReference type="InterPro" id="IPR000731">
    <property type="entry name" value="SSD"/>
</dbReference>
<dbReference type="PANTHER" id="PTHR33406">
    <property type="entry name" value="MEMBRANE PROTEIN MJ1562-RELATED"/>
    <property type="match status" value="1"/>
</dbReference>
<dbReference type="PANTHER" id="PTHR33406:SF6">
    <property type="entry name" value="MEMBRANE PROTEIN YDGH-RELATED"/>
    <property type="match status" value="1"/>
</dbReference>
<dbReference type="Pfam" id="PF03176">
    <property type="entry name" value="MMPL"/>
    <property type="match status" value="2"/>
</dbReference>
<dbReference type="SUPFAM" id="SSF82866">
    <property type="entry name" value="Multidrug efflux transporter AcrB transmembrane domain"/>
    <property type="match status" value="2"/>
</dbReference>
<dbReference type="PROSITE" id="PS50156">
    <property type="entry name" value="SSD"/>
    <property type="match status" value="2"/>
</dbReference>
<comment type="subcellular location">
    <subcellularLocation>
        <location evidence="3">Cell membrane</location>
        <topology evidence="3">Multi-pass membrane protein</topology>
    </subcellularLocation>
</comment>
<comment type="similarity">
    <text evidence="3">Belongs to the resistance-nodulation-cell division (RND) (TC 2.A.6) family. MmpL subfamily.</text>
</comment>
<reference key="1">
    <citation type="journal article" date="1991" name="Cell">
        <title>The act cluster contains regulatory and antibiotic export genes, direct targets for translational control by the bldA tRNA gene of Streptomyces.</title>
        <authorList>
            <person name="Fernandez-Moreno M.A."/>
            <person name="Caballero J.L."/>
            <person name="Hopwood D.A."/>
            <person name="Malpartida F."/>
        </authorList>
    </citation>
    <scope>NUCLEOTIDE SEQUENCE [GENOMIC DNA]</scope>
</reference>
<reference key="2">
    <citation type="journal article" date="2002" name="Nature">
        <title>Complete genome sequence of the model actinomycete Streptomyces coelicolor A3(2).</title>
        <authorList>
            <person name="Bentley S.D."/>
            <person name="Chater K.F."/>
            <person name="Cerdeno-Tarraga A.-M."/>
            <person name="Challis G.L."/>
            <person name="Thomson N.R."/>
            <person name="James K.D."/>
            <person name="Harris D.E."/>
            <person name="Quail M.A."/>
            <person name="Kieser H."/>
            <person name="Harper D."/>
            <person name="Bateman A."/>
            <person name="Brown S."/>
            <person name="Chandra G."/>
            <person name="Chen C.W."/>
            <person name="Collins M."/>
            <person name="Cronin A."/>
            <person name="Fraser A."/>
            <person name="Goble A."/>
            <person name="Hidalgo J."/>
            <person name="Hornsby T."/>
            <person name="Howarth S."/>
            <person name="Huang C.-H."/>
            <person name="Kieser T."/>
            <person name="Larke L."/>
            <person name="Murphy L.D."/>
            <person name="Oliver K."/>
            <person name="O'Neil S."/>
            <person name="Rabbinowitsch E."/>
            <person name="Rajandream M.A."/>
            <person name="Rutherford K.M."/>
            <person name="Rutter S."/>
            <person name="Seeger K."/>
            <person name="Saunders D."/>
            <person name="Sharp S."/>
            <person name="Squares R."/>
            <person name="Squares S."/>
            <person name="Taylor K."/>
            <person name="Warren T."/>
            <person name="Wietzorrek A."/>
            <person name="Woodward J.R."/>
            <person name="Barrell B.G."/>
            <person name="Parkhill J."/>
            <person name="Hopwood D.A."/>
        </authorList>
    </citation>
    <scope>NUCLEOTIDE SEQUENCE [LARGE SCALE GENOMIC DNA]</scope>
    <source>
        <strain>ATCC BAA-471 / A3(2) / M145</strain>
    </source>
</reference>
<protein>
    <recommendedName>
        <fullName>Putative membrane protein ActII-3</fullName>
    </recommendedName>
</protein>